<gene>
    <name evidence="1" type="primary">pyrF</name>
    <name type="ordered locus">Gbem_2890</name>
</gene>
<name>PYRF_CITBB</name>
<protein>
    <recommendedName>
        <fullName evidence="1">Orotidine 5'-phosphate decarboxylase</fullName>
        <ecNumber evidence="1">4.1.1.23</ecNumber>
    </recommendedName>
    <alternativeName>
        <fullName evidence="1">OMP decarboxylase</fullName>
        <shortName evidence="1">OMPDCase</shortName>
        <shortName evidence="1">OMPdecase</shortName>
    </alternativeName>
</protein>
<feature type="chain" id="PRO_1000138530" description="Orotidine 5'-phosphate decarboxylase">
    <location>
        <begin position="1"/>
        <end position="240"/>
    </location>
</feature>
<feature type="active site" description="Proton donor" evidence="1">
    <location>
        <position position="66"/>
    </location>
</feature>
<feature type="binding site" evidence="1">
    <location>
        <position position="15"/>
    </location>
    <ligand>
        <name>substrate</name>
    </ligand>
</feature>
<feature type="binding site" evidence="1">
    <location>
        <position position="37"/>
    </location>
    <ligand>
        <name>substrate</name>
    </ligand>
</feature>
<feature type="binding site" evidence="1">
    <location>
        <begin position="64"/>
        <end position="73"/>
    </location>
    <ligand>
        <name>substrate</name>
    </ligand>
</feature>
<feature type="binding site" evidence="1">
    <location>
        <position position="127"/>
    </location>
    <ligand>
        <name>substrate</name>
    </ligand>
</feature>
<feature type="binding site" evidence="1">
    <location>
        <position position="188"/>
    </location>
    <ligand>
        <name>substrate</name>
    </ligand>
</feature>
<feature type="binding site" evidence="1">
    <location>
        <position position="197"/>
    </location>
    <ligand>
        <name>substrate</name>
    </ligand>
</feature>
<feature type="binding site" evidence="1">
    <location>
        <position position="217"/>
    </location>
    <ligand>
        <name>substrate</name>
    </ligand>
</feature>
<feature type="binding site" evidence="1">
    <location>
        <position position="218"/>
    </location>
    <ligand>
        <name>substrate</name>
    </ligand>
</feature>
<comment type="function">
    <text evidence="1">Catalyzes the decarboxylation of orotidine 5'-monophosphate (OMP) to uridine 5'-monophosphate (UMP).</text>
</comment>
<comment type="catalytic activity">
    <reaction evidence="1">
        <text>orotidine 5'-phosphate + H(+) = UMP + CO2</text>
        <dbReference type="Rhea" id="RHEA:11596"/>
        <dbReference type="ChEBI" id="CHEBI:15378"/>
        <dbReference type="ChEBI" id="CHEBI:16526"/>
        <dbReference type="ChEBI" id="CHEBI:57538"/>
        <dbReference type="ChEBI" id="CHEBI:57865"/>
        <dbReference type="EC" id="4.1.1.23"/>
    </reaction>
</comment>
<comment type="pathway">
    <text evidence="1">Pyrimidine metabolism; UMP biosynthesis via de novo pathway; UMP from orotate: step 2/2.</text>
</comment>
<comment type="subunit">
    <text evidence="1">Homodimer.</text>
</comment>
<comment type="similarity">
    <text evidence="1">Belongs to the OMP decarboxylase family. Type 1 subfamily.</text>
</comment>
<organism>
    <name type="scientific">Citrifermentans bemidjiense (strain ATCC BAA-1014 / DSM 16622 / JCM 12645 / Bem)</name>
    <name type="common">Geobacter bemidjiensis</name>
    <dbReference type="NCBI Taxonomy" id="404380"/>
    <lineage>
        <taxon>Bacteria</taxon>
        <taxon>Pseudomonadati</taxon>
        <taxon>Thermodesulfobacteriota</taxon>
        <taxon>Desulfuromonadia</taxon>
        <taxon>Geobacterales</taxon>
        <taxon>Geobacteraceae</taxon>
        <taxon>Citrifermentans</taxon>
    </lineage>
</organism>
<keyword id="KW-0210">Decarboxylase</keyword>
<keyword id="KW-0456">Lyase</keyword>
<keyword id="KW-0665">Pyrimidine biosynthesis</keyword>
<keyword id="KW-1185">Reference proteome</keyword>
<sequence>MTREEAIKKIIFAMDVKEFSDVQYWAELLSQHVGMFKVGKQLYTACGPAAVRMIQKCGGEVFLDLKYHDIPNTVAMATLEAANLGVQLCDLHAMGGYEMMNKTMETLDKNFSGCTARPKVLAITVLTSSNEETLRGIGIELPVPEMVVKLAKLAKSAGVDGVVASPQEVELIREACGKDFLVVTPGVRPSFASADDQKRIMSPAEAVKAGADYLVIGRPIAAAQSPVEAAQKIVDEIVAG</sequence>
<evidence type="ECO:0000255" key="1">
    <source>
        <dbReference type="HAMAP-Rule" id="MF_01200"/>
    </source>
</evidence>
<accession>B5EIT8</accession>
<proteinExistence type="inferred from homology"/>
<reference key="1">
    <citation type="submission" date="2008-07" db="EMBL/GenBank/DDBJ databases">
        <title>Complete sequence of Geobacter bemidjiensis BEM.</title>
        <authorList>
            <consortium name="US DOE Joint Genome Institute"/>
            <person name="Lucas S."/>
            <person name="Copeland A."/>
            <person name="Lapidus A."/>
            <person name="Glavina del Rio T."/>
            <person name="Dalin E."/>
            <person name="Tice H."/>
            <person name="Bruce D."/>
            <person name="Goodwin L."/>
            <person name="Pitluck S."/>
            <person name="Kiss H."/>
            <person name="Brettin T."/>
            <person name="Detter J.C."/>
            <person name="Han C."/>
            <person name="Kuske C.R."/>
            <person name="Schmutz J."/>
            <person name="Larimer F."/>
            <person name="Land M."/>
            <person name="Hauser L."/>
            <person name="Kyrpides N."/>
            <person name="Lykidis A."/>
            <person name="Lovley D."/>
            <person name="Richardson P."/>
        </authorList>
    </citation>
    <scope>NUCLEOTIDE SEQUENCE [LARGE SCALE GENOMIC DNA]</scope>
    <source>
        <strain>ATCC BAA-1014 / DSM 16622 / JCM 12645 / Bem</strain>
    </source>
</reference>
<dbReference type="EC" id="4.1.1.23" evidence="1"/>
<dbReference type="EMBL" id="CP001124">
    <property type="protein sequence ID" value="ACH39893.1"/>
    <property type="molecule type" value="Genomic_DNA"/>
</dbReference>
<dbReference type="RefSeq" id="WP_012531318.1">
    <property type="nucleotide sequence ID" value="NC_011146.1"/>
</dbReference>
<dbReference type="SMR" id="B5EIT8"/>
<dbReference type="STRING" id="404380.Gbem_2890"/>
<dbReference type="KEGG" id="gbm:Gbem_2890"/>
<dbReference type="eggNOG" id="COG0284">
    <property type="taxonomic scope" value="Bacteria"/>
</dbReference>
<dbReference type="HOGENOM" id="CLU_067069_0_0_7"/>
<dbReference type="OrthoDB" id="9806203at2"/>
<dbReference type="UniPathway" id="UPA00070">
    <property type="reaction ID" value="UER00120"/>
</dbReference>
<dbReference type="Proteomes" id="UP000008825">
    <property type="component" value="Chromosome"/>
</dbReference>
<dbReference type="GO" id="GO:0005829">
    <property type="term" value="C:cytosol"/>
    <property type="evidence" value="ECO:0007669"/>
    <property type="project" value="TreeGrafter"/>
</dbReference>
<dbReference type="GO" id="GO:0004590">
    <property type="term" value="F:orotidine-5'-phosphate decarboxylase activity"/>
    <property type="evidence" value="ECO:0007669"/>
    <property type="project" value="UniProtKB-UniRule"/>
</dbReference>
<dbReference type="GO" id="GO:0006207">
    <property type="term" value="P:'de novo' pyrimidine nucleobase biosynthetic process"/>
    <property type="evidence" value="ECO:0007669"/>
    <property type="project" value="InterPro"/>
</dbReference>
<dbReference type="GO" id="GO:0044205">
    <property type="term" value="P:'de novo' UMP biosynthetic process"/>
    <property type="evidence" value="ECO:0007669"/>
    <property type="project" value="UniProtKB-UniRule"/>
</dbReference>
<dbReference type="CDD" id="cd04725">
    <property type="entry name" value="OMP_decarboxylase_like"/>
    <property type="match status" value="1"/>
</dbReference>
<dbReference type="FunFam" id="3.20.20.70:FF:000015">
    <property type="entry name" value="Orotidine 5'-phosphate decarboxylase"/>
    <property type="match status" value="1"/>
</dbReference>
<dbReference type="Gene3D" id="3.20.20.70">
    <property type="entry name" value="Aldolase class I"/>
    <property type="match status" value="1"/>
</dbReference>
<dbReference type="HAMAP" id="MF_01200_B">
    <property type="entry name" value="OMPdecase_type1_B"/>
    <property type="match status" value="1"/>
</dbReference>
<dbReference type="InterPro" id="IPR013785">
    <property type="entry name" value="Aldolase_TIM"/>
</dbReference>
<dbReference type="InterPro" id="IPR014732">
    <property type="entry name" value="OMPdecase"/>
</dbReference>
<dbReference type="InterPro" id="IPR018089">
    <property type="entry name" value="OMPdecase_AS"/>
</dbReference>
<dbReference type="InterPro" id="IPR047596">
    <property type="entry name" value="OMPdecase_bac"/>
</dbReference>
<dbReference type="InterPro" id="IPR001754">
    <property type="entry name" value="OMPdeCOase_dom"/>
</dbReference>
<dbReference type="InterPro" id="IPR011060">
    <property type="entry name" value="RibuloseP-bd_barrel"/>
</dbReference>
<dbReference type="NCBIfam" id="NF001273">
    <property type="entry name" value="PRK00230.1"/>
    <property type="match status" value="1"/>
</dbReference>
<dbReference type="NCBIfam" id="TIGR01740">
    <property type="entry name" value="pyrF"/>
    <property type="match status" value="1"/>
</dbReference>
<dbReference type="PANTHER" id="PTHR32119">
    <property type="entry name" value="OROTIDINE 5'-PHOSPHATE DECARBOXYLASE"/>
    <property type="match status" value="1"/>
</dbReference>
<dbReference type="PANTHER" id="PTHR32119:SF2">
    <property type="entry name" value="OROTIDINE 5'-PHOSPHATE DECARBOXYLASE"/>
    <property type="match status" value="1"/>
</dbReference>
<dbReference type="Pfam" id="PF00215">
    <property type="entry name" value="OMPdecase"/>
    <property type="match status" value="1"/>
</dbReference>
<dbReference type="SMART" id="SM00934">
    <property type="entry name" value="OMPdecase"/>
    <property type="match status" value="1"/>
</dbReference>
<dbReference type="SUPFAM" id="SSF51366">
    <property type="entry name" value="Ribulose-phoshate binding barrel"/>
    <property type="match status" value="1"/>
</dbReference>
<dbReference type="PROSITE" id="PS00156">
    <property type="entry name" value="OMPDECASE"/>
    <property type="match status" value="1"/>
</dbReference>